<name>RHPN2_BOVIN</name>
<evidence type="ECO:0000250" key="1"/>
<evidence type="ECO:0000250" key="2">
    <source>
        <dbReference type="UniProtKB" id="Q8BWR8"/>
    </source>
</evidence>
<evidence type="ECO:0000255" key="3">
    <source>
        <dbReference type="PROSITE-ProRule" id="PRU00143"/>
    </source>
</evidence>
<evidence type="ECO:0000255" key="4">
    <source>
        <dbReference type="PROSITE-ProRule" id="PRU00526"/>
    </source>
</evidence>
<evidence type="ECO:0000255" key="5">
    <source>
        <dbReference type="PROSITE-ProRule" id="PRU01207"/>
    </source>
</evidence>
<evidence type="ECO:0000305" key="6"/>
<proteinExistence type="evidence at transcript level"/>
<protein>
    <recommendedName>
        <fullName>Rhophilin-2</fullName>
    </recommendedName>
    <alternativeName>
        <fullName>GTP-Rho-binding protein 2</fullName>
    </alternativeName>
</protein>
<sequence>MTDTLLPAAPQPLEKEGNCYFRKGCNPLAQTGRSKLQNQRAALNQQILKAMRMRTGAENLLKAATNQKVREQVRLELSFLNSDLQMLKEELEGLNISVGVYQNTEEAFTIPLIPLGLKETKDVDFSVALKDFILEHYSEDSYLYEDEIADLMDLRQACRTPSRNEAGVELLMSYFMQLGFVESRFFPPTRQMGILFTWYDSLTGVPVSQQNLLLEKASILFNIGALYTQIGTRCNRQTEAGLESTVDAFQRAAGVLNYLKETFTHTPSYDMSPAMLSVLVKMMLAQAQESTFEKVCLPGLQNEFFLLVKVAQEAAKVGEVYRQLHTAMNQEPVKENIPYSWASLACVKAHHYEALAHYFTATLLIDHQLKPGEDEDHQEKCLSQLYSHMPEGLTPLATLKNVHQRQLLGKSHLCQAVTHHEESMREASLCKKLRNIDVLQEVLSAAHDRSQLKYTQLREDDDLLNLTDAPDIVSKTEREVEIIVPQFSKVTVTDFFQKLGPLSVFSANKRWTAPRSIHFTAEEGDLGFTLRGNSPVQVHFLDPYCSAAAAGTKEGDYIVSIQDVDCKWLTLSEVMKMLKSFGQDDIEMKVVSLLDATSTMHSKCATYSVGMQKTYSMICLGIDVDDKTDKTKKVSKKLSFLSWGTNKNRQKSASTLCLPSVGVTMPPVKKKLSSPFSLLNTDSSLY</sequence>
<dbReference type="EMBL" id="BC114709">
    <property type="protein sequence ID" value="AAI14710.1"/>
    <property type="molecule type" value="mRNA"/>
</dbReference>
<dbReference type="RefSeq" id="NP_001076939.1">
    <property type="nucleotide sequence ID" value="NM_001083470.1"/>
</dbReference>
<dbReference type="SMR" id="A4FUC9"/>
<dbReference type="FunCoup" id="A4FUC9">
    <property type="interactions" value="544"/>
</dbReference>
<dbReference type="STRING" id="9913.ENSBTAP00000004021"/>
<dbReference type="PaxDb" id="9913-ENSBTAP00000004021"/>
<dbReference type="Ensembl" id="ENSBTAT00000004021.5">
    <property type="protein sequence ID" value="ENSBTAP00000004021.5"/>
    <property type="gene ID" value="ENSBTAG00000003089.6"/>
</dbReference>
<dbReference type="GeneID" id="533687"/>
<dbReference type="KEGG" id="bta:533687"/>
<dbReference type="CTD" id="85415"/>
<dbReference type="VEuPathDB" id="HostDB:ENSBTAG00000003089"/>
<dbReference type="VGNC" id="VGNC:52240">
    <property type="gene designation" value="RHPN2"/>
</dbReference>
<dbReference type="eggNOG" id="KOG2220">
    <property type="taxonomic scope" value="Eukaryota"/>
</dbReference>
<dbReference type="GeneTree" id="ENSGT00940000153837"/>
<dbReference type="InParanoid" id="A4FUC9"/>
<dbReference type="OMA" id="QAQENVF"/>
<dbReference type="OrthoDB" id="64867at2759"/>
<dbReference type="Reactome" id="R-BTA-5666185">
    <property type="pathway name" value="RHO GTPases Activate Rhotekin and Rhophilins"/>
</dbReference>
<dbReference type="Reactome" id="R-BTA-8980692">
    <property type="pathway name" value="RHOA GTPase cycle"/>
</dbReference>
<dbReference type="Proteomes" id="UP000009136">
    <property type="component" value="Chromosome 18"/>
</dbReference>
<dbReference type="Bgee" id="ENSBTAG00000003089">
    <property type="expression patterns" value="Expressed in saliva-secreting gland and 99 other cell types or tissues"/>
</dbReference>
<dbReference type="GO" id="GO:0048471">
    <property type="term" value="C:perinuclear region of cytoplasm"/>
    <property type="evidence" value="ECO:0007669"/>
    <property type="project" value="UniProtKB-SubCell"/>
</dbReference>
<dbReference type="GO" id="GO:0005886">
    <property type="term" value="C:plasma membrane"/>
    <property type="evidence" value="ECO:0007669"/>
    <property type="project" value="Ensembl"/>
</dbReference>
<dbReference type="GO" id="GO:0003094">
    <property type="term" value="P:glomerular filtration"/>
    <property type="evidence" value="ECO:0007669"/>
    <property type="project" value="Ensembl"/>
</dbReference>
<dbReference type="GO" id="GO:0051497">
    <property type="term" value="P:negative regulation of stress fiber assembly"/>
    <property type="evidence" value="ECO:0000318"/>
    <property type="project" value="GO_Central"/>
</dbReference>
<dbReference type="GO" id="GO:0007165">
    <property type="term" value="P:signal transduction"/>
    <property type="evidence" value="ECO:0007669"/>
    <property type="project" value="InterPro"/>
</dbReference>
<dbReference type="CDD" id="cd09249">
    <property type="entry name" value="BRO1_Rhophilin_2"/>
    <property type="match status" value="1"/>
</dbReference>
<dbReference type="CDD" id="cd11634">
    <property type="entry name" value="HR1_Rhophilin-2"/>
    <property type="match status" value="1"/>
</dbReference>
<dbReference type="CDD" id="cd06712">
    <property type="entry name" value="PDZ_rhophilin-like"/>
    <property type="match status" value="1"/>
</dbReference>
<dbReference type="FunFam" id="1.10.287.160:FF:000007">
    <property type="entry name" value="Rhophilin-2"/>
    <property type="match status" value="1"/>
</dbReference>
<dbReference type="FunFam" id="1.25.40.280:FF:000003">
    <property type="entry name" value="RHPN1 isoform 1"/>
    <property type="match status" value="1"/>
</dbReference>
<dbReference type="FunFam" id="2.30.42.10:FF:000160">
    <property type="entry name" value="RHPN1 isoform 1"/>
    <property type="match status" value="1"/>
</dbReference>
<dbReference type="Gene3D" id="2.30.42.10">
    <property type="match status" value="1"/>
</dbReference>
<dbReference type="Gene3D" id="1.25.40.280">
    <property type="entry name" value="alix/aip1 like domains"/>
    <property type="match status" value="1"/>
</dbReference>
<dbReference type="Gene3D" id="1.10.287.160">
    <property type="entry name" value="HR1 repeat"/>
    <property type="match status" value="1"/>
</dbReference>
<dbReference type="InterPro" id="IPR004328">
    <property type="entry name" value="BRO1_dom"/>
</dbReference>
<dbReference type="InterPro" id="IPR038499">
    <property type="entry name" value="BRO1_sf"/>
</dbReference>
<dbReference type="InterPro" id="IPR011072">
    <property type="entry name" value="HR1_rho-bd"/>
</dbReference>
<dbReference type="InterPro" id="IPR036274">
    <property type="entry name" value="HR1_rpt_sf"/>
</dbReference>
<dbReference type="InterPro" id="IPR001478">
    <property type="entry name" value="PDZ"/>
</dbReference>
<dbReference type="InterPro" id="IPR036034">
    <property type="entry name" value="PDZ_sf"/>
</dbReference>
<dbReference type="InterPro" id="IPR049603">
    <property type="entry name" value="Rhophilin-2_HR1"/>
</dbReference>
<dbReference type="InterPro" id="IPR047138">
    <property type="entry name" value="RHPN1_2"/>
</dbReference>
<dbReference type="InterPro" id="IPR047902">
    <property type="entry name" value="RHPN2_BRO1"/>
</dbReference>
<dbReference type="PANTHER" id="PTHR23031">
    <property type="entry name" value="RHOPHILIN"/>
    <property type="match status" value="1"/>
</dbReference>
<dbReference type="PANTHER" id="PTHR23031:SF5">
    <property type="entry name" value="RHOPHILIN-2-RELATED"/>
    <property type="match status" value="1"/>
</dbReference>
<dbReference type="Pfam" id="PF03097">
    <property type="entry name" value="BRO1"/>
    <property type="match status" value="1"/>
</dbReference>
<dbReference type="Pfam" id="PF02185">
    <property type="entry name" value="HR1"/>
    <property type="match status" value="1"/>
</dbReference>
<dbReference type="Pfam" id="PF00595">
    <property type="entry name" value="PDZ"/>
    <property type="match status" value="1"/>
</dbReference>
<dbReference type="SMART" id="SM01041">
    <property type="entry name" value="BRO1"/>
    <property type="match status" value="1"/>
</dbReference>
<dbReference type="SMART" id="SM00742">
    <property type="entry name" value="Hr1"/>
    <property type="match status" value="1"/>
</dbReference>
<dbReference type="SMART" id="SM00228">
    <property type="entry name" value="PDZ"/>
    <property type="match status" value="1"/>
</dbReference>
<dbReference type="SUPFAM" id="SSF46585">
    <property type="entry name" value="HR1 repeat"/>
    <property type="match status" value="1"/>
</dbReference>
<dbReference type="SUPFAM" id="SSF50156">
    <property type="entry name" value="PDZ domain-like"/>
    <property type="match status" value="1"/>
</dbReference>
<dbReference type="PROSITE" id="PS51180">
    <property type="entry name" value="BRO1"/>
    <property type="match status" value="1"/>
</dbReference>
<dbReference type="PROSITE" id="PS50106">
    <property type="entry name" value="PDZ"/>
    <property type="match status" value="1"/>
</dbReference>
<dbReference type="PROSITE" id="PS51860">
    <property type="entry name" value="REM_1"/>
    <property type="match status" value="1"/>
</dbReference>
<organism>
    <name type="scientific">Bos taurus</name>
    <name type="common">Bovine</name>
    <dbReference type="NCBI Taxonomy" id="9913"/>
    <lineage>
        <taxon>Eukaryota</taxon>
        <taxon>Metazoa</taxon>
        <taxon>Chordata</taxon>
        <taxon>Craniata</taxon>
        <taxon>Vertebrata</taxon>
        <taxon>Euteleostomi</taxon>
        <taxon>Mammalia</taxon>
        <taxon>Eutheria</taxon>
        <taxon>Laurasiatheria</taxon>
        <taxon>Artiodactyla</taxon>
        <taxon>Ruminantia</taxon>
        <taxon>Pecora</taxon>
        <taxon>Bovidae</taxon>
        <taxon>Bovinae</taxon>
        <taxon>Bos</taxon>
    </lineage>
</organism>
<comment type="function">
    <text evidence="1">Binds specifically to GTP-Rho. May function in a Rho pathway to limit stress fiber formation and/or increase the turnover of F-actin structures in the absence of high levels of RhoA activity (By similarity).</text>
</comment>
<comment type="subunit">
    <text evidence="1">Interacts with GTP-bound RhoA and RhoB. Interacts with both GTP- and GDP-bound RhoA. Interacts with KRT18 (By similarity).</text>
</comment>
<comment type="subcellular location">
    <subcellularLocation>
        <location evidence="1">Cytoplasm</location>
        <location evidence="1">Perinuclear region</location>
    </subcellularLocation>
</comment>
<comment type="similarity">
    <text evidence="6">Belongs to the RHPN family.</text>
</comment>
<feature type="chain" id="PRO_0000340662" description="Rhophilin-2">
    <location>
        <begin position="1"/>
        <end position="686"/>
    </location>
</feature>
<feature type="domain" description="REM-1" evidence="5">
    <location>
        <begin position="26"/>
        <end position="100"/>
    </location>
</feature>
<feature type="domain" description="BRO1" evidence="4">
    <location>
        <begin position="111"/>
        <end position="460"/>
    </location>
</feature>
<feature type="domain" description="PDZ" evidence="3">
    <location>
        <begin position="515"/>
        <end position="593"/>
    </location>
</feature>
<feature type="region of interest" description="Interaction with Rho" evidence="1">
    <location>
        <begin position="46"/>
        <end position="66"/>
    </location>
</feature>
<feature type="modified residue" description="Phosphothreonine" evidence="2">
    <location>
        <position position="655"/>
    </location>
</feature>
<reference key="1">
    <citation type="submission" date="2006-04" db="EMBL/GenBank/DDBJ databases">
        <authorList>
            <consortium name="NIH - Mammalian Gene Collection (MGC) project"/>
        </authorList>
    </citation>
    <scope>NUCLEOTIDE SEQUENCE [LARGE SCALE MRNA]</scope>
    <source>
        <strain>Hereford</strain>
        <tissue>Uterus</tissue>
    </source>
</reference>
<gene>
    <name type="primary">RHPN2</name>
</gene>
<accession>A4FUC9</accession>
<keyword id="KW-0175">Coiled coil</keyword>
<keyword id="KW-0963">Cytoplasm</keyword>
<keyword id="KW-0597">Phosphoprotein</keyword>
<keyword id="KW-1185">Reference proteome</keyword>